<feature type="chain" id="PRO_1000194805" description="DNA-directed RNA polymerase subunit omega">
    <location>
        <begin position="1"/>
        <end position="67"/>
    </location>
</feature>
<dbReference type="EC" id="2.7.7.6" evidence="1"/>
<dbReference type="EMBL" id="CP001279">
    <property type="protein sequence ID" value="ACM93053.1"/>
    <property type="molecule type" value="Genomic_DNA"/>
</dbReference>
<dbReference type="RefSeq" id="WP_015902105.1">
    <property type="nucleotide sequence ID" value="NC_012115.1"/>
</dbReference>
<dbReference type="SMR" id="B9L8H3"/>
<dbReference type="STRING" id="598659.NAMH_0513"/>
<dbReference type="KEGG" id="nam:NAMH_0513"/>
<dbReference type="eggNOG" id="COG1758">
    <property type="taxonomic scope" value="Bacteria"/>
</dbReference>
<dbReference type="HOGENOM" id="CLU_125406_3_0_7"/>
<dbReference type="OrthoDB" id="5334728at2"/>
<dbReference type="Proteomes" id="UP000000448">
    <property type="component" value="Chromosome"/>
</dbReference>
<dbReference type="GO" id="GO:0000428">
    <property type="term" value="C:DNA-directed RNA polymerase complex"/>
    <property type="evidence" value="ECO:0007669"/>
    <property type="project" value="UniProtKB-KW"/>
</dbReference>
<dbReference type="GO" id="GO:0003677">
    <property type="term" value="F:DNA binding"/>
    <property type="evidence" value="ECO:0007669"/>
    <property type="project" value="UniProtKB-UniRule"/>
</dbReference>
<dbReference type="GO" id="GO:0003899">
    <property type="term" value="F:DNA-directed RNA polymerase activity"/>
    <property type="evidence" value="ECO:0007669"/>
    <property type="project" value="UniProtKB-UniRule"/>
</dbReference>
<dbReference type="GO" id="GO:0006351">
    <property type="term" value="P:DNA-templated transcription"/>
    <property type="evidence" value="ECO:0007669"/>
    <property type="project" value="UniProtKB-UniRule"/>
</dbReference>
<dbReference type="Gene3D" id="3.90.940.10">
    <property type="match status" value="1"/>
</dbReference>
<dbReference type="HAMAP" id="MF_00366">
    <property type="entry name" value="RNApol_bact_RpoZ"/>
    <property type="match status" value="1"/>
</dbReference>
<dbReference type="InterPro" id="IPR003716">
    <property type="entry name" value="DNA-dir_RNA_pol_omega"/>
</dbReference>
<dbReference type="InterPro" id="IPR006110">
    <property type="entry name" value="Pol_omega/Rpo6/RPB6"/>
</dbReference>
<dbReference type="InterPro" id="IPR036161">
    <property type="entry name" value="RPB6/omega-like_sf"/>
</dbReference>
<dbReference type="NCBIfam" id="NF001579">
    <property type="entry name" value="PRK00392.6-2"/>
    <property type="match status" value="1"/>
</dbReference>
<dbReference type="Pfam" id="PF01192">
    <property type="entry name" value="RNA_pol_Rpb6"/>
    <property type="match status" value="1"/>
</dbReference>
<dbReference type="SMART" id="SM01409">
    <property type="entry name" value="RNA_pol_Rpb6"/>
    <property type="match status" value="1"/>
</dbReference>
<dbReference type="SUPFAM" id="SSF63562">
    <property type="entry name" value="RPB6/omega subunit-like"/>
    <property type="match status" value="1"/>
</dbReference>
<gene>
    <name evidence="1" type="primary">rpoZ</name>
    <name type="ordered locus">NAMH_0513</name>
</gene>
<organism>
    <name type="scientific">Nautilia profundicola (strain ATCC BAA-1463 / DSM 18972 / AmH)</name>
    <dbReference type="NCBI Taxonomy" id="598659"/>
    <lineage>
        <taxon>Bacteria</taxon>
        <taxon>Pseudomonadati</taxon>
        <taxon>Campylobacterota</taxon>
        <taxon>Epsilonproteobacteria</taxon>
        <taxon>Nautiliales</taxon>
        <taxon>Nautiliaceae</taxon>
        <taxon>Nautilia</taxon>
    </lineage>
</organism>
<protein>
    <recommendedName>
        <fullName evidence="1">DNA-directed RNA polymerase subunit omega</fullName>
        <shortName evidence="1">RNAP omega subunit</shortName>
        <ecNumber evidence="1">2.7.7.6</ecNumber>
    </recommendedName>
    <alternativeName>
        <fullName evidence="1">RNA polymerase omega subunit</fullName>
    </alternativeName>
    <alternativeName>
        <fullName evidence="1">Transcriptase subunit omega</fullName>
    </alternativeName>
</protein>
<comment type="function">
    <text evidence="1">Promotes RNA polymerase assembly. Latches the N- and C-terminal regions of the beta' subunit thereby facilitating its interaction with the beta and alpha subunits.</text>
</comment>
<comment type="catalytic activity">
    <reaction evidence="1">
        <text>RNA(n) + a ribonucleoside 5'-triphosphate = RNA(n+1) + diphosphate</text>
        <dbReference type="Rhea" id="RHEA:21248"/>
        <dbReference type="Rhea" id="RHEA-COMP:14527"/>
        <dbReference type="Rhea" id="RHEA-COMP:17342"/>
        <dbReference type="ChEBI" id="CHEBI:33019"/>
        <dbReference type="ChEBI" id="CHEBI:61557"/>
        <dbReference type="ChEBI" id="CHEBI:140395"/>
        <dbReference type="EC" id="2.7.7.6"/>
    </reaction>
</comment>
<comment type="subunit">
    <text evidence="1">The RNAP catalytic core consists of 2 alpha, 1 beta, 1 beta' and 1 omega subunit. When a sigma factor is associated with the core the holoenzyme is formed, which can initiate transcription.</text>
</comment>
<comment type="similarity">
    <text evidence="1">Belongs to the RNA polymerase subunit omega family.</text>
</comment>
<name>RPOZ_NAUPA</name>
<evidence type="ECO:0000255" key="1">
    <source>
        <dbReference type="HAMAP-Rule" id="MF_00366"/>
    </source>
</evidence>
<reference key="1">
    <citation type="journal article" date="2009" name="PLoS Genet.">
        <title>Adaptations to submarine hydrothermal environments exemplified by the genome of Nautilia profundicola.</title>
        <authorList>
            <person name="Campbell B.J."/>
            <person name="Smith J.L."/>
            <person name="Hanson T.E."/>
            <person name="Klotz M.G."/>
            <person name="Stein L.Y."/>
            <person name="Lee C.K."/>
            <person name="Wu D."/>
            <person name="Robinson J.M."/>
            <person name="Khouri H.M."/>
            <person name="Eisen J.A."/>
            <person name="Cary S.C."/>
        </authorList>
    </citation>
    <scope>NUCLEOTIDE SEQUENCE [LARGE SCALE GENOMIC DNA]</scope>
    <source>
        <strain>ATCC BAA-1463 / DSM 18972 / AmH</strain>
    </source>
</reference>
<keyword id="KW-0240">DNA-directed RNA polymerase</keyword>
<keyword id="KW-0548">Nucleotidyltransferase</keyword>
<keyword id="KW-0804">Transcription</keyword>
<keyword id="KW-0808">Transferase</keyword>
<sequence length="67" mass="7602">MRIEQINARALEKVNYDRYLLSQAIAKRVNELINGAKPLIELPKPNMQLTEIATLEIAEGLVKVKEV</sequence>
<accession>B9L8H3</accession>
<proteinExistence type="inferred from homology"/>